<reference key="1">
    <citation type="submission" date="2009-07" db="EMBL/GenBank/DDBJ databases">
        <title>Complete sequence of Pectobacterium carotovorum subsp. carotovorum PC1.</title>
        <authorList>
            <consortium name="US DOE Joint Genome Institute"/>
            <person name="Lucas S."/>
            <person name="Copeland A."/>
            <person name="Lapidus A."/>
            <person name="Glavina del Rio T."/>
            <person name="Tice H."/>
            <person name="Bruce D."/>
            <person name="Goodwin L."/>
            <person name="Pitluck S."/>
            <person name="Munk A.C."/>
            <person name="Brettin T."/>
            <person name="Detter J.C."/>
            <person name="Han C."/>
            <person name="Tapia R."/>
            <person name="Larimer F."/>
            <person name="Land M."/>
            <person name="Hauser L."/>
            <person name="Kyrpides N."/>
            <person name="Mikhailova N."/>
            <person name="Balakrishnan V."/>
            <person name="Glasner J."/>
            <person name="Perna N.T."/>
        </authorList>
    </citation>
    <scope>NUCLEOTIDE SEQUENCE [LARGE SCALE GENOMIC DNA]</scope>
    <source>
        <strain>PC1</strain>
    </source>
</reference>
<comment type="function">
    <text evidence="1">Functions in the N-end rule pathway of protein degradation where it conjugates Leu, Phe and, less efficiently, Met from aminoacyl-tRNAs to the N-termini of proteins containing an N-terminal arginine or lysine.</text>
</comment>
<comment type="catalytic activity">
    <reaction evidence="1">
        <text>N-terminal L-lysyl-[protein] + L-leucyl-tRNA(Leu) = N-terminal L-leucyl-L-lysyl-[protein] + tRNA(Leu) + H(+)</text>
        <dbReference type="Rhea" id="RHEA:12340"/>
        <dbReference type="Rhea" id="RHEA-COMP:9613"/>
        <dbReference type="Rhea" id="RHEA-COMP:9622"/>
        <dbReference type="Rhea" id="RHEA-COMP:12670"/>
        <dbReference type="Rhea" id="RHEA-COMP:12671"/>
        <dbReference type="ChEBI" id="CHEBI:15378"/>
        <dbReference type="ChEBI" id="CHEBI:65249"/>
        <dbReference type="ChEBI" id="CHEBI:78442"/>
        <dbReference type="ChEBI" id="CHEBI:78494"/>
        <dbReference type="ChEBI" id="CHEBI:133043"/>
        <dbReference type="EC" id="2.3.2.6"/>
    </reaction>
</comment>
<comment type="catalytic activity">
    <reaction evidence="1">
        <text>N-terminal L-arginyl-[protein] + L-leucyl-tRNA(Leu) = N-terminal L-leucyl-L-arginyl-[protein] + tRNA(Leu) + H(+)</text>
        <dbReference type="Rhea" id="RHEA:50416"/>
        <dbReference type="Rhea" id="RHEA-COMP:9613"/>
        <dbReference type="Rhea" id="RHEA-COMP:9622"/>
        <dbReference type="Rhea" id="RHEA-COMP:12672"/>
        <dbReference type="Rhea" id="RHEA-COMP:12673"/>
        <dbReference type="ChEBI" id="CHEBI:15378"/>
        <dbReference type="ChEBI" id="CHEBI:64719"/>
        <dbReference type="ChEBI" id="CHEBI:78442"/>
        <dbReference type="ChEBI" id="CHEBI:78494"/>
        <dbReference type="ChEBI" id="CHEBI:133044"/>
        <dbReference type="EC" id="2.3.2.6"/>
    </reaction>
</comment>
<comment type="catalytic activity">
    <reaction evidence="1">
        <text>L-phenylalanyl-tRNA(Phe) + an N-terminal L-alpha-aminoacyl-[protein] = an N-terminal L-phenylalanyl-L-alpha-aminoacyl-[protein] + tRNA(Phe)</text>
        <dbReference type="Rhea" id="RHEA:43632"/>
        <dbReference type="Rhea" id="RHEA-COMP:9668"/>
        <dbReference type="Rhea" id="RHEA-COMP:9699"/>
        <dbReference type="Rhea" id="RHEA-COMP:10636"/>
        <dbReference type="Rhea" id="RHEA-COMP:10637"/>
        <dbReference type="ChEBI" id="CHEBI:78442"/>
        <dbReference type="ChEBI" id="CHEBI:78531"/>
        <dbReference type="ChEBI" id="CHEBI:78597"/>
        <dbReference type="ChEBI" id="CHEBI:83561"/>
        <dbReference type="EC" id="2.3.2.6"/>
    </reaction>
</comment>
<comment type="subcellular location">
    <subcellularLocation>
        <location evidence="1">Cytoplasm</location>
    </subcellularLocation>
</comment>
<comment type="similarity">
    <text evidence="1">Belongs to the L/F-transferase family.</text>
</comment>
<name>LFTR_PECCP</name>
<protein>
    <recommendedName>
        <fullName evidence="1">Leucyl/phenylalanyl-tRNA--protein transferase</fullName>
        <ecNumber evidence="1">2.3.2.6</ecNumber>
    </recommendedName>
    <alternativeName>
        <fullName evidence="1">L/F-transferase</fullName>
    </alternativeName>
    <alternativeName>
        <fullName evidence="1">Leucyltransferase</fullName>
    </alternativeName>
    <alternativeName>
        <fullName evidence="1">Phenyalanyltransferase</fullName>
    </alternativeName>
</protein>
<keyword id="KW-0012">Acyltransferase</keyword>
<keyword id="KW-0963">Cytoplasm</keyword>
<keyword id="KW-0808">Transferase</keyword>
<dbReference type="EC" id="2.3.2.6" evidence="1"/>
<dbReference type="EMBL" id="CP001657">
    <property type="protein sequence ID" value="ACT12755.1"/>
    <property type="molecule type" value="Genomic_DNA"/>
</dbReference>
<dbReference type="RefSeq" id="WP_015839968.1">
    <property type="nucleotide sequence ID" value="NC_012917.1"/>
</dbReference>
<dbReference type="SMR" id="C6DF46"/>
<dbReference type="STRING" id="561230.PC1_1714"/>
<dbReference type="KEGG" id="pct:PC1_1714"/>
<dbReference type="eggNOG" id="COG2360">
    <property type="taxonomic scope" value="Bacteria"/>
</dbReference>
<dbReference type="HOGENOM" id="CLU_075045_0_0_6"/>
<dbReference type="OrthoDB" id="9790282at2"/>
<dbReference type="Proteomes" id="UP000002736">
    <property type="component" value="Chromosome"/>
</dbReference>
<dbReference type="GO" id="GO:0005737">
    <property type="term" value="C:cytoplasm"/>
    <property type="evidence" value="ECO:0007669"/>
    <property type="project" value="UniProtKB-SubCell"/>
</dbReference>
<dbReference type="GO" id="GO:0008914">
    <property type="term" value="F:leucyl-tRNA--protein transferase activity"/>
    <property type="evidence" value="ECO:0007669"/>
    <property type="project" value="UniProtKB-UniRule"/>
</dbReference>
<dbReference type="GO" id="GO:0030163">
    <property type="term" value="P:protein catabolic process"/>
    <property type="evidence" value="ECO:0007669"/>
    <property type="project" value="UniProtKB-UniRule"/>
</dbReference>
<dbReference type="FunFam" id="3.30.70.3550:FF:000001">
    <property type="entry name" value="Leucyl/phenylalanyl-tRNA--protein transferase"/>
    <property type="match status" value="1"/>
</dbReference>
<dbReference type="FunFam" id="3.40.630.70:FF:000001">
    <property type="entry name" value="Leucyl/phenylalanyl-tRNA--protein transferase"/>
    <property type="match status" value="1"/>
</dbReference>
<dbReference type="Gene3D" id="3.40.630.70">
    <property type="entry name" value="Leucyl/phenylalanyl-tRNA-protein transferase, C-terminal domain"/>
    <property type="match status" value="1"/>
</dbReference>
<dbReference type="Gene3D" id="3.30.70.3550">
    <property type="entry name" value="Leucyl/phenylalanyl-tRNA-protein transferase, N-terminal domain"/>
    <property type="match status" value="1"/>
</dbReference>
<dbReference type="HAMAP" id="MF_00688">
    <property type="entry name" value="Leu_Phe_trans"/>
    <property type="match status" value="1"/>
</dbReference>
<dbReference type="InterPro" id="IPR016181">
    <property type="entry name" value="Acyl_CoA_acyltransferase"/>
</dbReference>
<dbReference type="InterPro" id="IPR004616">
    <property type="entry name" value="Leu/Phe-tRNA_Trfase"/>
</dbReference>
<dbReference type="InterPro" id="IPR042203">
    <property type="entry name" value="Leu/Phe-tRNA_Trfase_C"/>
</dbReference>
<dbReference type="InterPro" id="IPR042221">
    <property type="entry name" value="Leu/Phe-tRNA_Trfase_N"/>
</dbReference>
<dbReference type="NCBIfam" id="TIGR00667">
    <property type="entry name" value="aat"/>
    <property type="match status" value="1"/>
</dbReference>
<dbReference type="PANTHER" id="PTHR30098">
    <property type="entry name" value="LEUCYL/PHENYLALANYL-TRNA--PROTEIN TRANSFERASE"/>
    <property type="match status" value="1"/>
</dbReference>
<dbReference type="PANTHER" id="PTHR30098:SF2">
    <property type="entry name" value="LEUCYL_PHENYLALANYL-TRNA--PROTEIN TRANSFERASE"/>
    <property type="match status" value="1"/>
</dbReference>
<dbReference type="Pfam" id="PF03588">
    <property type="entry name" value="Leu_Phe_trans"/>
    <property type="match status" value="1"/>
</dbReference>
<dbReference type="SUPFAM" id="SSF55729">
    <property type="entry name" value="Acyl-CoA N-acyltransferases (Nat)"/>
    <property type="match status" value="1"/>
</dbReference>
<gene>
    <name evidence="1" type="primary">aat</name>
    <name type="ordered locus">PC1_1714</name>
</gene>
<evidence type="ECO:0000255" key="1">
    <source>
        <dbReference type="HAMAP-Rule" id="MF_00688"/>
    </source>
</evidence>
<feature type="chain" id="PRO_1000212571" description="Leucyl/phenylalanyl-tRNA--protein transferase">
    <location>
        <begin position="1"/>
        <end position="234"/>
    </location>
</feature>
<proteinExistence type="inferred from homology"/>
<sequence length="234" mass="26426">MRLYQLSSQSLQFPDPNHALDDPNGLLAVGGDLSVARLKAAYRQGIFPWFSPGEPILWWSPNPRAVLFPDELHVSRSMKKFLKRHTFHATLNQAFDDVIHACAHEHHDGTWITSEIISAYRQLHLAGKAHSVEVWQDDKLVGGLYGVEQGRLFCGESMFSRTDNASKYALLAFQQHFIHHGGHLIDCQVLNAHTASLGVSEIPRDRFLQQLSQWQDLAVDDGCWLPQQLAEPTL</sequence>
<organism>
    <name type="scientific">Pectobacterium carotovorum subsp. carotovorum (strain PC1)</name>
    <dbReference type="NCBI Taxonomy" id="561230"/>
    <lineage>
        <taxon>Bacteria</taxon>
        <taxon>Pseudomonadati</taxon>
        <taxon>Pseudomonadota</taxon>
        <taxon>Gammaproteobacteria</taxon>
        <taxon>Enterobacterales</taxon>
        <taxon>Pectobacteriaceae</taxon>
        <taxon>Pectobacterium</taxon>
    </lineage>
</organism>
<accession>C6DF46</accession>